<comment type="function">
    <text evidence="1 2 4 5">Esterase; part of the cla gene cluster that produces clavatol and ortho-quinone methide (PubMed:30811183). The clavatol biosynthesis cluster cla and the terrestric acid cluster tra are both involved in the production of peniphenones and penilactones (PubMed:30811183). The non-reducing PKS claF is responsible for the formation of clavatol from successive condensations of 3 malonyl-CoA units, presumably with a simple acetyl-CoA starter unit, and 2 methylation steps (PubMed:30811183). The esterase claE probably collaborates with claF by catalyzing the hydrolysis of ACP-bound acyl intermediates to free the ACP from stalled intermediates (By similarity). The clavatol oxidase claD then converts clavatol to hydroxyclavatol (PubMed:30811183). Spontaneous dehydration of hydroxyclavatol leads to the accumulation of the highly active ortho-quinone methide (PubMed:30811183, PubMed:31860310). On the other hand, the PKS-NRPS hybrid traA is involved in the formation of crustosic acid, with the help of traB and traD (PubMed:30811183). The polyketide synthase module (PKS) of traA is responsible for the synthesis of the polyketide backbone via the condensation of an acetyl-CoA starter unit with 3 malonyl-CoA units (PubMed:30811183). The downstream nonribosomal peptide synthetase (NRPS) module then amidates the carboxyl end of the polyketide with L-malic acid (PubMed:30811183). Because traA lacks a designated enoylreductase (ER) domain, the required activity is provided the enoyl reductase traG (By similarity). Crustosic acid undergoes decarboxylation and isomerization to the terrestric acid, catalyzed by the 2-oxoglutarate-dependent dioxygenase traH (PubMed:30811183). Both acids are further converted to the 2 gamma-butyrolactones (R)-5-methyltetronic acid and (S)-5-carboxylmethyltetronic acid, with involvement of the cytochrome P450 monooxygenase claJ (PubMed:30811183). Spontaneous addition of the methide to these gamma-butyrolactones leads to peniphenone D and penilactone D, which undergo again stereospecific attacking by methide to give penilactones A and B (PubMed:30811183, PubMed:31860310).</text>
</comment>
<comment type="pathway">
    <text evidence="2">Secondary metabolite biosynthesis.</text>
</comment>
<comment type="similarity">
    <text evidence="7">Belongs to the LovG family.</text>
</comment>
<feature type="chain" id="PRO_0000455064" description="Esterase claE">
    <location>
        <begin position="1"/>
        <end position="265"/>
    </location>
</feature>
<feature type="active site" description="Charge relay system" evidence="2">
    <location>
        <position position="121"/>
    </location>
</feature>
<feature type="active site" description="Charge relay system" evidence="3">
    <location>
        <position position="211"/>
    </location>
</feature>
<feature type="active site" description="Charge relay system" evidence="3">
    <location>
        <position position="239"/>
    </location>
</feature>
<organism>
    <name type="scientific">Penicillium crustosum</name>
    <name type="common">Blue mold fungus</name>
    <dbReference type="NCBI Taxonomy" id="36656"/>
    <lineage>
        <taxon>Eukaryota</taxon>
        <taxon>Fungi</taxon>
        <taxon>Dikarya</taxon>
        <taxon>Ascomycota</taxon>
        <taxon>Pezizomycotina</taxon>
        <taxon>Eurotiomycetes</taxon>
        <taxon>Eurotiomycetidae</taxon>
        <taxon>Eurotiales</taxon>
        <taxon>Aspergillaceae</taxon>
        <taxon>Penicillium</taxon>
    </lineage>
</organism>
<gene>
    <name evidence="6" type="primary">claE</name>
</gene>
<reference key="1">
    <citation type="journal article" date="2019" name="J. Am. Chem. Soc.">
        <title>Peniphenone and penilactone formation in Penicillium crustosum via 1,4-Michael additions of ortho-quinone methide from hydroxyclavatol to gamma-butyrolactones from Crustosic Acid.</title>
        <authorList>
            <person name="Fan J."/>
            <person name="Liao G."/>
            <person name="Kindinger F."/>
            <person name="Ludwig-Radtke L."/>
            <person name="Yin W.B."/>
            <person name="Li S.M."/>
        </authorList>
    </citation>
    <scope>NUCLEOTIDE SEQUENCE [GENOMIC DNA]</scope>
    <scope>FUNCTION</scope>
    <source>
        <strain>PRB-2</strain>
    </source>
</reference>
<reference key="2">
    <citation type="journal article" date="2020" name="J. Org. Chem.">
        <title>Increasing Structural Diversity of Natural Products by Michael Addition with ortho-Quinone Methide as the Acceptor.</title>
        <authorList>
            <person name="Liao G."/>
            <person name="Fan J."/>
            <person name="Ludwig-Radtke L."/>
            <person name="Backhaus K."/>
            <person name="Li S.M."/>
        </authorList>
    </citation>
    <scope>FUNCTION</scope>
</reference>
<evidence type="ECO:0000250" key="1">
    <source>
        <dbReference type="UniProtKB" id="A0A0E0RXA7"/>
    </source>
</evidence>
<evidence type="ECO:0000250" key="2">
    <source>
        <dbReference type="UniProtKB" id="A0A161CKG1"/>
    </source>
</evidence>
<evidence type="ECO:0000250" key="3">
    <source>
        <dbReference type="UniProtKB" id="P38777"/>
    </source>
</evidence>
<evidence type="ECO:0000269" key="4">
    <source>
    </source>
</evidence>
<evidence type="ECO:0000269" key="5">
    <source>
    </source>
</evidence>
<evidence type="ECO:0000303" key="6">
    <source>
    </source>
</evidence>
<evidence type="ECO:0000305" key="7"/>
<evidence type="ECO:0000305" key="8">
    <source>
    </source>
</evidence>
<accession>A0A481WP25</accession>
<protein>
    <recommendedName>
        <fullName evidence="6">Esterase claE</fullName>
        <ecNumber evidence="8">3.1.2.-</ecNumber>
    </recommendedName>
    <alternativeName>
        <fullName evidence="6">Terrestric acid biosynthesis cluster protein E</fullName>
    </alternativeName>
</protein>
<proteinExistence type="inferred from homology"/>
<sequence length="265" mass="30003">MNTTRTLDNSTIHLPRILCLHGGGTNARIFRAQCRGLIAGLKSEYRLVFAQAPFASQAGSDVLSVYSQWGPFRRWLRWRPEHPVIPPEDAVQEIDTWLEKAMHQDDLAGATGEWIALLGFSQGAKVSASLLYRQQSWQELFGTRPAGINFRFGILLAGQAPFISMDSDLTLDPPLPDASQITDLKHSERELFYGKGHVLRIPTLHVHGLRDKGLDHHRKLFEDFCAPQSRRLIEWDGDHRVPLKLKDVSLVIHQIRELAKETGVY</sequence>
<keyword id="KW-0378">Hydrolase</keyword>
<name>CLAE_PENCR</name>
<dbReference type="EC" id="3.1.2.-" evidence="8"/>
<dbReference type="EMBL" id="MK360918">
    <property type="protein sequence ID" value="QBK15043.1"/>
    <property type="molecule type" value="Genomic_DNA"/>
</dbReference>
<dbReference type="SMR" id="A0A481WP25"/>
<dbReference type="ESTHER" id="pencr-clae">
    <property type="family name" value="FSH1"/>
</dbReference>
<dbReference type="OrthoDB" id="414698at2759"/>
<dbReference type="GO" id="GO:0005737">
    <property type="term" value="C:cytoplasm"/>
    <property type="evidence" value="ECO:0007669"/>
    <property type="project" value="TreeGrafter"/>
</dbReference>
<dbReference type="GO" id="GO:0005634">
    <property type="term" value="C:nucleus"/>
    <property type="evidence" value="ECO:0007669"/>
    <property type="project" value="TreeGrafter"/>
</dbReference>
<dbReference type="GO" id="GO:0016787">
    <property type="term" value="F:hydrolase activity"/>
    <property type="evidence" value="ECO:0007669"/>
    <property type="project" value="UniProtKB-KW"/>
</dbReference>
<dbReference type="GO" id="GO:0017000">
    <property type="term" value="P:antibiotic biosynthetic process"/>
    <property type="evidence" value="ECO:0007669"/>
    <property type="project" value="UniProtKB-ARBA"/>
</dbReference>
<dbReference type="GO" id="GO:0072330">
    <property type="term" value="P:monocarboxylic acid biosynthetic process"/>
    <property type="evidence" value="ECO:0007669"/>
    <property type="project" value="UniProtKB-ARBA"/>
</dbReference>
<dbReference type="GO" id="GO:0044550">
    <property type="term" value="P:secondary metabolite biosynthetic process"/>
    <property type="evidence" value="ECO:0007669"/>
    <property type="project" value="TreeGrafter"/>
</dbReference>
<dbReference type="Gene3D" id="3.40.50.1820">
    <property type="entry name" value="alpha/beta hydrolase"/>
    <property type="match status" value="1"/>
</dbReference>
<dbReference type="InterPro" id="IPR029058">
    <property type="entry name" value="AB_hydrolase_fold"/>
</dbReference>
<dbReference type="InterPro" id="IPR005645">
    <property type="entry name" value="FSH-like_dom"/>
</dbReference>
<dbReference type="InterPro" id="IPR050593">
    <property type="entry name" value="LovG"/>
</dbReference>
<dbReference type="PANTHER" id="PTHR48070:SF3">
    <property type="entry name" value="ESTERASE DBAE-RELATED"/>
    <property type="match status" value="1"/>
</dbReference>
<dbReference type="PANTHER" id="PTHR48070">
    <property type="entry name" value="ESTERASE OVCA2"/>
    <property type="match status" value="1"/>
</dbReference>
<dbReference type="Pfam" id="PF03959">
    <property type="entry name" value="FSH1"/>
    <property type="match status" value="1"/>
</dbReference>
<dbReference type="SUPFAM" id="SSF53474">
    <property type="entry name" value="alpha/beta-Hydrolases"/>
    <property type="match status" value="1"/>
</dbReference>